<feature type="chain" id="PRO_0000251454" description="Ribulose bisphosphate carboxylase large chain">
    <location>
        <begin position="1"/>
        <end position="470"/>
    </location>
</feature>
<feature type="active site" description="Proton acceptor" evidence="1">
    <location>
        <position position="167"/>
    </location>
</feature>
<feature type="active site" description="Proton acceptor" evidence="1">
    <location>
        <position position="286"/>
    </location>
</feature>
<feature type="binding site" description="in homodimeric partner" evidence="1">
    <location>
        <position position="115"/>
    </location>
    <ligand>
        <name>substrate</name>
    </ligand>
</feature>
<feature type="binding site" evidence="1">
    <location>
        <position position="165"/>
    </location>
    <ligand>
        <name>substrate</name>
    </ligand>
</feature>
<feature type="binding site" evidence="1">
    <location>
        <position position="169"/>
    </location>
    <ligand>
        <name>substrate</name>
    </ligand>
</feature>
<feature type="binding site" description="via carbamate group" evidence="1">
    <location>
        <position position="193"/>
    </location>
    <ligand>
        <name>Mg(2+)</name>
        <dbReference type="ChEBI" id="CHEBI:18420"/>
    </ligand>
</feature>
<feature type="binding site" evidence="1">
    <location>
        <position position="195"/>
    </location>
    <ligand>
        <name>Mg(2+)</name>
        <dbReference type="ChEBI" id="CHEBI:18420"/>
    </ligand>
</feature>
<feature type="binding site" evidence="1">
    <location>
        <position position="196"/>
    </location>
    <ligand>
        <name>Mg(2+)</name>
        <dbReference type="ChEBI" id="CHEBI:18420"/>
    </ligand>
</feature>
<feature type="binding site" evidence="1">
    <location>
        <position position="287"/>
    </location>
    <ligand>
        <name>substrate</name>
    </ligand>
</feature>
<feature type="binding site" evidence="1">
    <location>
        <position position="319"/>
    </location>
    <ligand>
        <name>substrate</name>
    </ligand>
</feature>
<feature type="binding site" evidence="1">
    <location>
        <position position="371"/>
    </location>
    <ligand>
        <name>substrate</name>
    </ligand>
</feature>
<feature type="site" description="Transition state stabilizer" evidence="1">
    <location>
        <position position="326"/>
    </location>
</feature>
<feature type="modified residue" description="N6-carboxylysine" evidence="1">
    <location>
        <position position="193"/>
    </location>
</feature>
<sequence>MAKKYDAGVKEYRDTYFTPDYVPLDTDLLACFKCTGQEGVPKEEVAAAVAAESSTGTWSTVWSELLVDLEFYKGRCYRIEDVPGDKDAFYAFIAYPLDLFEEGSITNVLTSLVGNVFGFKALRHLRLEDIRFPMAFIKTCGGPPSGIVVERDRLNKYGRPLLGCTIKPKLGLSGKNYGRVVYECLRGGLDLTKDDENINSQPFQRWRERFEFVAEAVKLAQQETGEVKGHYLNCTATTPEEMYKRAEFAKELDMPIIMHDYITGGFTANTGLANWCRENGMLLHIHRAMHAVIDRHPQHGIHFRVLAKCLRLSGGDQLHTGTVVGKLEGDRQTTLGYIDNLRESFVPEDRTRGNFFDQDWGSMPGVFAVASGGIHVWHMPALLAIFGDDSCLQFGGGTHGHPWGSAAGAAANRVALEACVKARNAGREIEKESRDILLEAAKHSPELAIALETWKEIKFEFDTVDKLDVQ</sequence>
<proteinExistence type="inferred from homology"/>
<name>RBL_PROMT</name>
<evidence type="ECO:0000255" key="1">
    <source>
        <dbReference type="HAMAP-Rule" id="MF_01338"/>
    </source>
</evidence>
<protein>
    <recommendedName>
        <fullName evidence="1">Ribulose bisphosphate carboxylase large chain</fullName>
        <shortName evidence="1">RuBisCO large subunit</shortName>
        <ecNumber evidence="1">4.1.1.39</ecNumber>
    </recommendedName>
</protein>
<comment type="function">
    <text evidence="1">RuBisCO catalyzes two reactions: the carboxylation of D-ribulose 1,5-bisphosphate, the primary event in carbon dioxide fixation, as well as the oxidative fragmentation of the pentose substrate in the photorespiration process. Both reactions occur simultaneously and in competition at the same active site.</text>
</comment>
<comment type="catalytic activity">
    <reaction evidence="1">
        <text>2 (2R)-3-phosphoglycerate + 2 H(+) = D-ribulose 1,5-bisphosphate + CO2 + H2O</text>
        <dbReference type="Rhea" id="RHEA:23124"/>
        <dbReference type="ChEBI" id="CHEBI:15377"/>
        <dbReference type="ChEBI" id="CHEBI:15378"/>
        <dbReference type="ChEBI" id="CHEBI:16526"/>
        <dbReference type="ChEBI" id="CHEBI:57870"/>
        <dbReference type="ChEBI" id="CHEBI:58272"/>
        <dbReference type="EC" id="4.1.1.39"/>
    </reaction>
</comment>
<comment type="catalytic activity">
    <reaction evidence="1">
        <text>D-ribulose 1,5-bisphosphate + O2 = 2-phosphoglycolate + (2R)-3-phosphoglycerate + 2 H(+)</text>
        <dbReference type="Rhea" id="RHEA:36631"/>
        <dbReference type="ChEBI" id="CHEBI:15378"/>
        <dbReference type="ChEBI" id="CHEBI:15379"/>
        <dbReference type="ChEBI" id="CHEBI:57870"/>
        <dbReference type="ChEBI" id="CHEBI:58033"/>
        <dbReference type="ChEBI" id="CHEBI:58272"/>
    </reaction>
</comment>
<comment type="cofactor">
    <cofactor evidence="1">
        <name>Mg(2+)</name>
        <dbReference type="ChEBI" id="CHEBI:18420"/>
    </cofactor>
    <text evidence="1">Binds 1 Mg(2+) ion per subunit.</text>
</comment>
<comment type="subunit">
    <text evidence="1">Heterohexadecamer of 8 large chains and 8 small chains.</text>
</comment>
<comment type="subcellular location">
    <subcellularLocation>
        <location evidence="1">Carboxysome</location>
    </subcellularLocation>
</comment>
<comment type="miscellaneous">
    <text evidence="1">The basic functional RuBisCO is composed of a large chain homodimer in a 'head-to-tail' conformation. In form I RuBisCO this homodimer is arranged in a barrel-like tetramer with the small subunits forming a tetrameric 'cap' on each end of the 'barrel'.</text>
</comment>
<comment type="similarity">
    <text evidence="1">Belongs to the RuBisCO large chain family. Type I subfamily.</text>
</comment>
<reference key="1">
    <citation type="journal article" date="2007" name="PLoS Genet.">
        <title>Patterns and implications of gene gain and loss in the evolution of Prochlorococcus.</title>
        <authorList>
            <person name="Kettler G.C."/>
            <person name="Martiny A.C."/>
            <person name="Huang K."/>
            <person name="Zucker J."/>
            <person name="Coleman M.L."/>
            <person name="Rodrigue S."/>
            <person name="Chen F."/>
            <person name="Lapidus A."/>
            <person name="Ferriera S."/>
            <person name="Johnson J."/>
            <person name="Steglich C."/>
            <person name="Church G.M."/>
            <person name="Richardson P."/>
            <person name="Chisholm S.W."/>
        </authorList>
    </citation>
    <scope>NUCLEOTIDE SEQUENCE [LARGE SCALE GENOMIC DNA]</scope>
    <source>
        <strain>NATL2A</strain>
    </source>
</reference>
<organism>
    <name type="scientific">Prochlorococcus marinus (strain NATL2A)</name>
    <dbReference type="NCBI Taxonomy" id="59920"/>
    <lineage>
        <taxon>Bacteria</taxon>
        <taxon>Bacillati</taxon>
        <taxon>Cyanobacteriota</taxon>
        <taxon>Cyanophyceae</taxon>
        <taxon>Synechococcales</taxon>
        <taxon>Prochlorococcaceae</taxon>
        <taxon>Prochlorococcus</taxon>
    </lineage>
</organism>
<keyword id="KW-1283">Bacterial microcompartment</keyword>
<keyword id="KW-0113">Calvin cycle</keyword>
<keyword id="KW-0120">Carbon dioxide fixation</keyword>
<keyword id="KW-1282">Carboxysome</keyword>
<keyword id="KW-0456">Lyase</keyword>
<keyword id="KW-0460">Magnesium</keyword>
<keyword id="KW-0479">Metal-binding</keyword>
<keyword id="KW-0503">Monooxygenase</keyword>
<keyword id="KW-0560">Oxidoreductase</keyword>
<keyword id="KW-0601">Photorespiration</keyword>
<keyword id="KW-0602">Photosynthesis</keyword>
<keyword id="KW-1185">Reference proteome</keyword>
<dbReference type="EC" id="4.1.1.39" evidence="1"/>
<dbReference type="EMBL" id="CP000095">
    <property type="protein sequence ID" value="AAZ59367.1"/>
    <property type="molecule type" value="Genomic_DNA"/>
</dbReference>
<dbReference type="RefSeq" id="WP_011294510.1">
    <property type="nucleotide sequence ID" value="NC_007335.2"/>
</dbReference>
<dbReference type="SMR" id="Q46GN1"/>
<dbReference type="STRING" id="59920.PMN2A_1879"/>
<dbReference type="KEGG" id="pmn:PMN2A_1879"/>
<dbReference type="HOGENOM" id="CLU_031450_2_0_3"/>
<dbReference type="OrthoDB" id="9770811at2"/>
<dbReference type="PhylomeDB" id="Q46GN1"/>
<dbReference type="Proteomes" id="UP000002535">
    <property type="component" value="Chromosome"/>
</dbReference>
<dbReference type="GO" id="GO:0031470">
    <property type="term" value="C:carboxysome"/>
    <property type="evidence" value="ECO:0007669"/>
    <property type="project" value="UniProtKB-SubCell"/>
</dbReference>
<dbReference type="GO" id="GO:0000287">
    <property type="term" value="F:magnesium ion binding"/>
    <property type="evidence" value="ECO:0007669"/>
    <property type="project" value="UniProtKB-UniRule"/>
</dbReference>
<dbReference type="GO" id="GO:0004497">
    <property type="term" value="F:monooxygenase activity"/>
    <property type="evidence" value="ECO:0007669"/>
    <property type="project" value="UniProtKB-KW"/>
</dbReference>
<dbReference type="GO" id="GO:0016984">
    <property type="term" value="F:ribulose-bisphosphate carboxylase activity"/>
    <property type="evidence" value="ECO:0007669"/>
    <property type="project" value="UniProtKB-UniRule"/>
</dbReference>
<dbReference type="GO" id="GO:0009853">
    <property type="term" value="P:photorespiration"/>
    <property type="evidence" value="ECO:0007669"/>
    <property type="project" value="UniProtKB-KW"/>
</dbReference>
<dbReference type="GO" id="GO:0019253">
    <property type="term" value="P:reductive pentose-phosphate cycle"/>
    <property type="evidence" value="ECO:0007669"/>
    <property type="project" value="UniProtKB-UniRule"/>
</dbReference>
<dbReference type="Gene3D" id="3.20.20.110">
    <property type="entry name" value="Ribulose bisphosphate carboxylase, large subunit, C-terminal domain"/>
    <property type="match status" value="1"/>
</dbReference>
<dbReference type="Gene3D" id="3.30.70.150">
    <property type="entry name" value="RuBisCO large subunit, N-terminal domain"/>
    <property type="match status" value="1"/>
</dbReference>
<dbReference type="HAMAP" id="MF_01338">
    <property type="entry name" value="RuBisCO_L_type1"/>
    <property type="match status" value="1"/>
</dbReference>
<dbReference type="InterPro" id="IPR033966">
    <property type="entry name" value="RuBisCO"/>
</dbReference>
<dbReference type="InterPro" id="IPR000685">
    <property type="entry name" value="RuBisCO_lsu_C"/>
</dbReference>
<dbReference type="InterPro" id="IPR036376">
    <property type="entry name" value="RuBisCO_lsu_C_sf"/>
</dbReference>
<dbReference type="InterPro" id="IPR017443">
    <property type="entry name" value="RuBisCO_lsu_fd_N"/>
</dbReference>
<dbReference type="InterPro" id="IPR036422">
    <property type="entry name" value="RuBisCO_lsu_N_sf"/>
</dbReference>
<dbReference type="InterPro" id="IPR020888">
    <property type="entry name" value="RuBisCO_lsuI"/>
</dbReference>
<dbReference type="NCBIfam" id="NF003252">
    <property type="entry name" value="PRK04208.1"/>
    <property type="match status" value="1"/>
</dbReference>
<dbReference type="PANTHER" id="PTHR42704">
    <property type="entry name" value="RIBULOSE BISPHOSPHATE CARBOXYLASE"/>
    <property type="match status" value="1"/>
</dbReference>
<dbReference type="PANTHER" id="PTHR42704:SF17">
    <property type="entry name" value="RIBULOSE BISPHOSPHATE CARBOXYLASE LARGE CHAIN"/>
    <property type="match status" value="1"/>
</dbReference>
<dbReference type="Pfam" id="PF00016">
    <property type="entry name" value="RuBisCO_large"/>
    <property type="match status" value="1"/>
</dbReference>
<dbReference type="Pfam" id="PF02788">
    <property type="entry name" value="RuBisCO_large_N"/>
    <property type="match status" value="1"/>
</dbReference>
<dbReference type="SFLD" id="SFLDG01052">
    <property type="entry name" value="RuBisCO"/>
    <property type="match status" value="1"/>
</dbReference>
<dbReference type="SFLD" id="SFLDS00014">
    <property type="entry name" value="RuBisCO"/>
    <property type="match status" value="1"/>
</dbReference>
<dbReference type="SFLD" id="SFLDG00301">
    <property type="entry name" value="RuBisCO-like_proteins"/>
    <property type="match status" value="1"/>
</dbReference>
<dbReference type="SUPFAM" id="SSF51649">
    <property type="entry name" value="RuBisCo, C-terminal domain"/>
    <property type="match status" value="1"/>
</dbReference>
<dbReference type="SUPFAM" id="SSF54966">
    <property type="entry name" value="RuBisCO, large subunit, small (N-terminal) domain"/>
    <property type="match status" value="1"/>
</dbReference>
<accession>Q46GN1</accession>
<gene>
    <name evidence="1" type="primary">cbbL</name>
    <name evidence="1" type="synonym">rbcL</name>
    <name type="ordered locus">PMN2A_1879</name>
</gene>